<name>NUOB_DESHY</name>
<organism>
    <name type="scientific">Desulfitobacterium hafniense (strain Y51)</name>
    <dbReference type="NCBI Taxonomy" id="138119"/>
    <lineage>
        <taxon>Bacteria</taxon>
        <taxon>Bacillati</taxon>
        <taxon>Bacillota</taxon>
        <taxon>Clostridia</taxon>
        <taxon>Eubacteriales</taxon>
        <taxon>Desulfitobacteriaceae</taxon>
        <taxon>Desulfitobacterium</taxon>
    </lineage>
</organism>
<reference key="1">
    <citation type="journal article" date="2006" name="J. Bacteriol.">
        <title>Complete genome sequence of the dehalorespiring bacterium Desulfitobacterium hafniense Y51 and comparison with Dehalococcoides ethenogenes 195.</title>
        <authorList>
            <person name="Nonaka H."/>
            <person name="Keresztes G."/>
            <person name="Shinoda Y."/>
            <person name="Ikenaga Y."/>
            <person name="Abe M."/>
            <person name="Naito K."/>
            <person name="Inatomi K."/>
            <person name="Furukawa K."/>
            <person name="Inui M."/>
            <person name="Yukawa H."/>
        </authorList>
    </citation>
    <scope>NUCLEOTIDE SEQUENCE [LARGE SCALE GENOMIC DNA]</scope>
    <source>
        <strain>Y51</strain>
    </source>
</reference>
<feature type="chain" id="PRO_0000376197" description="NADH-quinone oxidoreductase subunit B">
    <location>
        <begin position="1"/>
        <end position="173"/>
    </location>
</feature>
<feature type="binding site" evidence="1">
    <location>
        <position position="46"/>
    </location>
    <ligand>
        <name>[4Fe-4S] cluster</name>
        <dbReference type="ChEBI" id="CHEBI:49883"/>
    </ligand>
</feature>
<feature type="binding site" evidence="1">
    <location>
        <position position="47"/>
    </location>
    <ligand>
        <name>[4Fe-4S] cluster</name>
        <dbReference type="ChEBI" id="CHEBI:49883"/>
    </ligand>
</feature>
<feature type="binding site" evidence="1">
    <location>
        <position position="112"/>
    </location>
    <ligand>
        <name>[4Fe-4S] cluster</name>
        <dbReference type="ChEBI" id="CHEBI:49883"/>
    </ligand>
</feature>
<feature type="binding site" evidence="1">
    <location>
        <position position="142"/>
    </location>
    <ligand>
        <name>[4Fe-4S] cluster</name>
        <dbReference type="ChEBI" id="CHEBI:49883"/>
    </ligand>
</feature>
<dbReference type="EC" id="7.1.1.-" evidence="1"/>
<dbReference type="EMBL" id="AP008230">
    <property type="protein sequence ID" value="BAE84376.1"/>
    <property type="molecule type" value="Genomic_DNA"/>
</dbReference>
<dbReference type="RefSeq" id="WP_005813216.1">
    <property type="nucleotide sequence ID" value="NC_007907.1"/>
</dbReference>
<dbReference type="SMR" id="Q24UB6"/>
<dbReference type="STRING" id="138119.DSY2587"/>
<dbReference type="KEGG" id="dsy:DSY2587"/>
<dbReference type="eggNOG" id="COG0377">
    <property type="taxonomic scope" value="Bacteria"/>
</dbReference>
<dbReference type="HOGENOM" id="CLU_055737_7_3_9"/>
<dbReference type="Proteomes" id="UP000001946">
    <property type="component" value="Chromosome"/>
</dbReference>
<dbReference type="GO" id="GO:0005886">
    <property type="term" value="C:plasma membrane"/>
    <property type="evidence" value="ECO:0007669"/>
    <property type="project" value="UniProtKB-SubCell"/>
</dbReference>
<dbReference type="GO" id="GO:0045271">
    <property type="term" value="C:respiratory chain complex I"/>
    <property type="evidence" value="ECO:0007669"/>
    <property type="project" value="TreeGrafter"/>
</dbReference>
<dbReference type="GO" id="GO:0051539">
    <property type="term" value="F:4 iron, 4 sulfur cluster binding"/>
    <property type="evidence" value="ECO:0007669"/>
    <property type="project" value="UniProtKB-KW"/>
</dbReference>
<dbReference type="GO" id="GO:0005506">
    <property type="term" value="F:iron ion binding"/>
    <property type="evidence" value="ECO:0007669"/>
    <property type="project" value="UniProtKB-UniRule"/>
</dbReference>
<dbReference type="GO" id="GO:0008137">
    <property type="term" value="F:NADH dehydrogenase (ubiquinone) activity"/>
    <property type="evidence" value="ECO:0007669"/>
    <property type="project" value="InterPro"/>
</dbReference>
<dbReference type="GO" id="GO:0050136">
    <property type="term" value="F:NADH:ubiquinone reductase (non-electrogenic) activity"/>
    <property type="evidence" value="ECO:0007669"/>
    <property type="project" value="UniProtKB-UniRule"/>
</dbReference>
<dbReference type="GO" id="GO:0048038">
    <property type="term" value="F:quinone binding"/>
    <property type="evidence" value="ECO:0007669"/>
    <property type="project" value="UniProtKB-KW"/>
</dbReference>
<dbReference type="GO" id="GO:0009060">
    <property type="term" value="P:aerobic respiration"/>
    <property type="evidence" value="ECO:0007669"/>
    <property type="project" value="TreeGrafter"/>
</dbReference>
<dbReference type="GO" id="GO:0015990">
    <property type="term" value="P:electron transport coupled proton transport"/>
    <property type="evidence" value="ECO:0007669"/>
    <property type="project" value="TreeGrafter"/>
</dbReference>
<dbReference type="FunFam" id="3.40.50.12280:FF:000002">
    <property type="entry name" value="NADH-quinone oxidoreductase subunit B"/>
    <property type="match status" value="1"/>
</dbReference>
<dbReference type="Gene3D" id="3.40.50.12280">
    <property type="match status" value="1"/>
</dbReference>
<dbReference type="HAMAP" id="MF_01356">
    <property type="entry name" value="NDH1_NuoB"/>
    <property type="match status" value="1"/>
</dbReference>
<dbReference type="InterPro" id="IPR006137">
    <property type="entry name" value="NADH_UbQ_OxRdtase-like_20kDa"/>
</dbReference>
<dbReference type="InterPro" id="IPR006138">
    <property type="entry name" value="NADH_UQ_OxRdtase_20Kd_su"/>
</dbReference>
<dbReference type="NCBIfam" id="TIGR01957">
    <property type="entry name" value="nuoB_fam"/>
    <property type="match status" value="1"/>
</dbReference>
<dbReference type="NCBIfam" id="NF005012">
    <property type="entry name" value="PRK06411.1"/>
    <property type="match status" value="1"/>
</dbReference>
<dbReference type="PANTHER" id="PTHR11995">
    <property type="entry name" value="NADH DEHYDROGENASE"/>
    <property type="match status" value="1"/>
</dbReference>
<dbReference type="PANTHER" id="PTHR11995:SF14">
    <property type="entry name" value="NADH DEHYDROGENASE [UBIQUINONE] IRON-SULFUR PROTEIN 7, MITOCHONDRIAL"/>
    <property type="match status" value="1"/>
</dbReference>
<dbReference type="Pfam" id="PF01058">
    <property type="entry name" value="Oxidored_q6"/>
    <property type="match status" value="1"/>
</dbReference>
<dbReference type="SUPFAM" id="SSF56770">
    <property type="entry name" value="HydA/Nqo6-like"/>
    <property type="match status" value="1"/>
</dbReference>
<dbReference type="PROSITE" id="PS01150">
    <property type="entry name" value="COMPLEX1_20K"/>
    <property type="match status" value="1"/>
</dbReference>
<protein>
    <recommendedName>
        <fullName evidence="1">NADH-quinone oxidoreductase subunit B</fullName>
        <ecNumber evidence="1">7.1.1.-</ecNumber>
    </recommendedName>
    <alternativeName>
        <fullName evidence="1">NADH dehydrogenase I subunit B</fullName>
    </alternativeName>
    <alternativeName>
        <fullName evidence="1">NDH-1 subunit B</fullName>
    </alternativeName>
</protein>
<accession>Q24UB6</accession>
<proteinExistence type="inferred from homology"/>
<evidence type="ECO:0000255" key="1">
    <source>
        <dbReference type="HAMAP-Rule" id="MF_01356"/>
    </source>
</evidence>
<keyword id="KW-0004">4Fe-4S</keyword>
<keyword id="KW-1003">Cell membrane</keyword>
<keyword id="KW-0408">Iron</keyword>
<keyword id="KW-0411">Iron-sulfur</keyword>
<keyword id="KW-0472">Membrane</keyword>
<keyword id="KW-0479">Metal-binding</keyword>
<keyword id="KW-0520">NAD</keyword>
<keyword id="KW-0874">Quinone</keyword>
<keyword id="KW-1185">Reference proteome</keyword>
<keyword id="KW-1278">Translocase</keyword>
<keyword id="KW-0813">Transport</keyword>
<comment type="function">
    <text evidence="1">NDH-1 shuttles electrons from NADH, via FMN and iron-sulfur (Fe-S) centers, to quinones in the respiratory chain. The immediate electron acceptor for the enzyme in this species is believed to be a menaquinone. Couples the redox reaction to proton translocation (for every two electrons transferred, four hydrogen ions are translocated across the cytoplasmic membrane), and thus conserves the redox energy in a proton gradient.</text>
</comment>
<comment type="catalytic activity">
    <reaction evidence="1">
        <text>a quinone + NADH + 5 H(+)(in) = a quinol + NAD(+) + 4 H(+)(out)</text>
        <dbReference type="Rhea" id="RHEA:57888"/>
        <dbReference type="ChEBI" id="CHEBI:15378"/>
        <dbReference type="ChEBI" id="CHEBI:24646"/>
        <dbReference type="ChEBI" id="CHEBI:57540"/>
        <dbReference type="ChEBI" id="CHEBI:57945"/>
        <dbReference type="ChEBI" id="CHEBI:132124"/>
    </reaction>
</comment>
<comment type="cofactor">
    <cofactor evidence="1">
        <name>[4Fe-4S] cluster</name>
        <dbReference type="ChEBI" id="CHEBI:49883"/>
    </cofactor>
    <text evidence="1">Binds 1 [4Fe-4S] cluster.</text>
</comment>
<comment type="subunit">
    <text evidence="1">NDH-1 is composed of 14 different subunits. Subunits NuoB, C, D, E, F, and G constitute the peripheral sector of the complex.</text>
</comment>
<comment type="subcellular location">
    <subcellularLocation>
        <location evidence="1">Cell membrane</location>
        <topology evidence="1">Peripheral membrane protein</topology>
        <orientation evidence="1">Cytoplasmic side</orientation>
    </subcellularLocation>
</comment>
<comment type="similarity">
    <text evidence="1">Belongs to the complex I 20 kDa subunit family.</text>
</comment>
<gene>
    <name evidence="1" type="primary">nuoB</name>
    <name type="ordered locus">DSY2587</name>
</gene>
<sequence>MDVAKEKELREAEALMEKNVLLTSIDKVLNWGRGHSFWPVTFGLACCAIEMMAAGGPRVDISRFGYEVFRASPRHADVMIVAGTCTRKMAPLLRMIYDQMPEPKWVIAMGSCASAGGPFADSYSMLTGVDKIVPVDVYIPGCPPRPESLVYGLLQLQHKVNHPDKVRLLKHGK</sequence>